<proteinExistence type="inferred from homology"/>
<keyword id="KW-0963">Cytoplasm</keyword>
<keyword id="KW-0285">Flavoprotein</keyword>
<keyword id="KW-0288">FMN</keyword>
<keyword id="KW-0413">Isomerase</keyword>
<keyword id="KW-0414">Isoprene biosynthesis</keyword>
<keyword id="KW-0460">Magnesium</keyword>
<keyword id="KW-0479">Metal-binding</keyword>
<keyword id="KW-0521">NADP</keyword>
<keyword id="KW-1185">Reference proteome</keyword>
<reference key="1">
    <citation type="journal article" date="2008" name="Genome Res.">
        <title>Insights from the complete genome sequence of Mycobacterium marinum on the evolution of Mycobacterium tuberculosis.</title>
        <authorList>
            <person name="Stinear T.P."/>
            <person name="Seemann T."/>
            <person name="Harrison P.F."/>
            <person name="Jenkin G.A."/>
            <person name="Davies J.K."/>
            <person name="Johnson P.D."/>
            <person name="Abdellah Z."/>
            <person name="Arrowsmith C."/>
            <person name="Chillingworth T."/>
            <person name="Churcher C."/>
            <person name="Clarke K."/>
            <person name="Cronin A."/>
            <person name="Davis P."/>
            <person name="Goodhead I."/>
            <person name="Holroyd N."/>
            <person name="Jagels K."/>
            <person name="Lord A."/>
            <person name="Moule S."/>
            <person name="Mungall K."/>
            <person name="Norbertczak H."/>
            <person name="Quail M.A."/>
            <person name="Rabbinowitsch E."/>
            <person name="Walker D."/>
            <person name="White B."/>
            <person name="Whitehead S."/>
            <person name="Small P.L."/>
            <person name="Brosch R."/>
            <person name="Ramakrishnan L."/>
            <person name="Fischbach M.A."/>
            <person name="Parkhill J."/>
            <person name="Cole S.T."/>
        </authorList>
    </citation>
    <scope>NUCLEOTIDE SEQUENCE [LARGE SCALE GENOMIC DNA]</scope>
    <source>
        <strain>ATCC BAA-535 / M</strain>
    </source>
</reference>
<dbReference type="EC" id="5.3.3.2" evidence="1"/>
<dbReference type="EMBL" id="CP000854">
    <property type="protein sequence ID" value="ACC43216.1"/>
    <property type="molecule type" value="Genomic_DNA"/>
</dbReference>
<dbReference type="RefSeq" id="WP_012396348.1">
    <property type="nucleotide sequence ID" value="NC_010612.1"/>
</dbReference>
<dbReference type="SMR" id="B2HGA4"/>
<dbReference type="STRING" id="216594.MMAR_4812"/>
<dbReference type="KEGG" id="mmi:MMAR_4812"/>
<dbReference type="eggNOG" id="COG1304">
    <property type="taxonomic scope" value="Bacteria"/>
</dbReference>
<dbReference type="HOGENOM" id="CLU_065515_1_0_11"/>
<dbReference type="OrthoDB" id="9795032at2"/>
<dbReference type="Proteomes" id="UP000001190">
    <property type="component" value="Chromosome"/>
</dbReference>
<dbReference type="GO" id="GO:0005737">
    <property type="term" value="C:cytoplasm"/>
    <property type="evidence" value="ECO:0007669"/>
    <property type="project" value="UniProtKB-SubCell"/>
</dbReference>
<dbReference type="GO" id="GO:0010181">
    <property type="term" value="F:FMN binding"/>
    <property type="evidence" value="ECO:0007669"/>
    <property type="project" value="UniProtKB-UniRule"/>
</dbReference>
<dbReference type="GO" id="GO:0004452">
    <property type="term" value="F:isopentenyl-diphosphate delta-isomerase activity"/>
    <property type="evidence" value="ECO:0007669"/>
    <property type="project" value="UniProtKB-UniRule"/>
</dbReference>
<dbReference type="GO" id="GO:0000287">
    <property type="term" value="F:magnesium ion binding"/>
    <property type="evidence" value="ECO:0007669"/>
    <property type="project" value="UniProtKB-UniRule"/>
</dbReference>
<dbReference type="GO" id="GO:0070402">
    <property type="term" value="F:NADPH binding"/>
    <property type="evidence" value="ECO:0007669"/>
    <property type="project" value="UniProtKB-UniRule"/>
</dbReference>
<dbReference type="GO" id="GO:0016491">
    <property type="term" value="F:oxidoreductase activity"/>
    <property type="evidence" value="ECO:0007669"/>
    <property type="project" value="InterPro"/>
</dbReference>
<dbReference type="GO" id="GO:0008299">
    <property type="term" value="P:isoprenoid biosynthetic process"/>
    <property type="evidence" value="ECO:0007669"/>
    <property type="project" value="UniProtKB-UniRule"/>
</dbReference>
<dbReference type="CDD" id="cd02811">
    <property type="entry name" value="IDI-2_FMN"/>
    <property type="match status" value="1"/>
</dbReference>
<dbReference type="Gene3D" id="3.20.20.70">
    <property type="entry name" value="Aldolase class I"/>
    <property type="match status" value="1"/>
</dbReference>
<dbReference type="HAMAP" id="MF_00354">
    <property type="entry name" value="Idi_2"/>
    <property type="match status" value="1"/>
</dbReference>
<dbReference type="InterPro" id="IPR013785">
    <property type="entry name" value="Aldolase_TIM"/>
</dbReference>
<dbReference type="InterPro" id="IPR000262">
    <property type="entry name" value="FMN-dep_DH"/>
</dbReference>
<dbReference type="InterPro" id="IPR011179">
    <property type="entry name" value="IPdP_isomerase"/>
</dbReference>
<dbReference type="NCBIfam" id="TIGR02151">
    <property type="entry name" value="IPP_isom_2"/>
    <property type="match status" value="1"/>
</dbReference>
<dbReference type="PANTHER" id="PTHR43665">
    <property type="entry name" value="ISOPENTENYL-DIPHOSPHATE DELTA-ISOMERASE"/>
    <property type="match status" value="1"/>
</dbReference>
<dbReference type="PANTHER" id="PTHR43665:SF1">
    <property type="entry name" value="ISOPENTENYL-DIPHOSPHATE DELTA-ISOMERASE"/>
    <property type="match status" value="1"/>
</dbReference>
<dbReference type="Pfam" id="PF01070">
    <property type="entry name" value="FMN_dh"/>
    <property type="match status" value="2"/>
</dbReference>
<dbReference type="PIRSF" id="PIRSF003314">
    <property type="entry name" value="IPP_isomerase"/>
    <property type="match status" value="1"/>
</dbReference>
<dbReference type="SMART" id="SM01240">
    <property type="entry name" value="IMPDH"/>
    <property type="match status" value="1"/>
</dbReference>
<dbReference type="SUPFAM" id="SSF51395">
    <property type="entry name" value="FMN-linked oxidoreductases"/>
    <property type="match status" value="1"/>
</dbReference>
<gene>
    <name evidence="1" type="primary">fni</name>
    <name type="ordered locus">MMAR_4812</name>
</gene>
<evidence type="ECO:0000255" key="1">
    <source>
        <dbReference type="HAMAP-Rule" id="MF_00354"/>
    </source>
</evidence>
<comment type="function">
    <text evidence="1">Involved in the biosynthesis of isoprenoids. Catalyzes the 1,3-allylic rearrangement of the homoallylic substrate isopentenyl (IPP) to its allylic isomer, dimethylallyl diphosphate (DMAPP).</text>
</comment>
<comment type="catalytic activity">
    <reaction evidence="1">
        <text>isopentenyl diphosphate = dimethylallyl diphosphate</text>
        <dbReference type="Rhea" id="RHEA:23284"/>
        <dbReference type="ChEBI" id="CHEBI:57623"/>
        <dbReference type="ChEBI" id="CHEBI:128769"/>
        <dbReference type="EC" id="5.3.3.2"/>
    </reaction>
</comment>
<comment type="cofactor">
    <cofactor evidence="1">
        <name>FMN</name>
        <dbReference type="ChEBI" id="CHEBI:58210"/>
    </cofactor>
</comment>
<comment type="cofactor">
    <cofactor evidence="1">
        <name>NADPH</name>
        <dbReference type="ChEBI" id="CHEBI:57783"/>
    </cofactor>
</comment>
<comment type="cofactor">
    <cofactor evidence="1">
        <name>Mg(2+)</name>
        <dbReference type="ChEBI" id="CHEBI:18420"/>
    </cofactor>
</comment>
<comment type="subunit">
    <text evidence="1">Homooctamer. Dimer of tetramers.</text>
</comment>
<comment type="subcellular location">
    <subcellularLocation>
        <location evidence="1">Cytoplasm</location>
    </subcellularLocation>
</comment>
<comment type="similarity">
    <text evidence="1">Belongs to the IPP isomerase type 2 family.</text>
</comment>
<feature type="chain" id="PRO_1000120545" description="Isopentenyl-diphosphate delta-isomerase">
    <location>
        <begin position="1"/>
        <end position="348"/>
    </location>
</feature>
<feature type="binding site" evidence="1">
    <location>
        <begin position="11"/>
        <end position="12"/>
    </location>
    <ligand>
        <name>substrate</name>
    </ligand>
</feature>
<feature type="binding site" evidence="1">
    <location>
        <begin position="70"/>
        <end position="72"/>
    </location>
    <ligand>
        <name>FMN</name>
        <dbReference type="ChEBI" id="CHEBI:58210"/>
    </ligand>
</feature>
<feature type="binding site" evidence="1">
    <location>
        <begin position="100"/>
        <end position="102"/>
    </location>
    <ligand>
        <name>substrate</name>
    </ligand>
</feature>
<feature type="binding site" evidence="1">
    <location>
        <position position="100"/>
    </location>
    <ligand>
        <name>FMN</name>
        <dbReference type="ChEBI" id="CHEBI:58210"/>
    </ligand>
</feature>
<feature type="binding site" evidence="1">
    <location>
        <position position="131"/>
    </location>
    <ligand>
        <name>FMN</name>
        <dbReference type="ChEBI" id="CHEBI:58210"/>
    </ligand>
</feature>
<feature type="binding site" evidence="1">
    <location>
        <position position="165"/>
    </location>
    <ligand>
        <name>substrate</name>
    </ligand>
</feature>
<feature type="binding site" evidence="1">
    <location>
        <position position="166"/>
    </location>
    <ligand>
        <name>Mg(2+)</name>
        <dbReference type="ChEBI" id="CHEBI:18420"/>
    </ligand>
</feature>
<feature type="binding site" evidence="1">
    <location>
        <position position="197"/>
    </location>
    <ligand>
        <name>FMN</name>
        <dbReference type="ChEBI" id="CHEBI:58210"/>
    </ligand>
</feature>
<feature type="binding site" evidence="1">
    <location>
        <position position="231"/>
    </location>
    <ligand>
        <name>FMN</name>
        <dbReference type="ChEBI" id="CHEBI:58210"/>
    </ligand>
</feature>
<feature type="binding site" evidence="1">
    <location>
        <begin position="278"/>
        <end position="280"/>
    </location>
    <ligand>
        <name>FMN</name>
        <dbReference type="ChEBI" id="CHEBI:58210"/>
    </ligand>
</feature>
<feature type="binding site" evidence="1">
    <location>
        <begin position="299"/>
        <end position="300"/>
    </location>
    <ligand>
        <name>FMN</name>
        <dbReference type="ChEBI" id="CHEBI:58210"/>
    </ligand>
</feature>
<protein>
    <recommendedName>
        <fullName evidence="1">Isopentenyl-diphosphate delta-isomerase</fullName>
        <shortName evidence="1">IPP isomerase</shortName>
        <ecNumber evidence="1">5.3.3.2</ecNumber>
    </recommendedName>
    <alternativeName>
        <fullName evidence="1">Isopentenyl diphosphate:dimethylallyl diphosphate isomerase</fullName>
    </alternativeName>
    <alternativeName>
        <fullName evidence="1">Isopentenyl pyrophosphate isomerase</fullName>
    </alternativeName>
    <alternativeName>
        <fullName evidence="1">Type 2 isopentenyl diphosphate isomerase</fullName>
        <shortName evidence="1">IDI-2</shortName>
    </alternativeName>
</protein>
<accession>B2HGA4</accession>
<name>IDI2_MYCMM</name>
<sequence length="348" mass="36375">MTNDPAEISSRKRRHIDVCLNDEVNYVGVTTGLERYRLPFNALTQTSLADIDLSAEFFGAPLRAPVLIGAMTGGAELSATINRNLATAAQRLGIGMMLGSQRIMLDDARGQRAASSFAVREVAPDVLLIGNIGLAQLTKAAVPAVAAALRRVGANALAVHANSLQEAMQHGGDTDFSGSLGRLRDAADLLDYPVLLKEVGHGIGAAAVAQLLRLPGGLPVSGIDVAGAGGTSWSRVEQLVRYGELRYPELADWGIPTAEAIVEVRQALPAVPLVASGGIRTGMDAAKAIALGADVVAIARPLLAPAIESATAVQGWLQLFLDELRVCLHCCGARDLTSLRDIGVTAIR</sequence>
<organism>
    <name type="scientific">Mycobacterium marinum (strain ATCC BAA-535 / M)</name>
    <dbReference type="NCBI Taxonomy" id="216594"/>
    <lineage>
        <taxon>Bacteria</taxon>
        <taxon>Bacillati</taxon>
        <taxon>Actinomycetota</taxon>
        <taxon>Actinomycetes</taxon>
        <taxon>Mycobacteriales</taxon>
        <taxon>Mycobacteriaceae</taxon>
        <taxon>Mycobacterium</taxon>
        <taxon>Mycobacterium ulcerans group</taxon>
    </lineage>
</organism>